<sequence>MRVEVGQIVNTHGIKGEIKVKSNSDFTDVRFQPGQVLTVVHNNNDLEYTVKSHRVHKGLHMLTFEGINNINDIEHLKGSSIYQERDHEDIVLEENEFYYSDIIGCTVFDDQETPIGRVINIFETGANDVWVIKGSKEYLIPYIADVVKEVDVENKKIIITPMEGLLD</sequence>
<comment type="function">
    <text evidence="1">An accessory protein needed during the final step in the assembly of 30S ribosomal subunit, possibly for assembly of the head region. Essential for efficient processing of 16S rRNA. May be needed both before and after RbfA during the maturation of 16S rRNA. It has affinity for free ribosomal 30S subunits but not for 70S ribosomes.</text>
</comment>
<comment type="subunit">
    <text evidence="1">Binds ribosomal protein uS19.</text>
</comment>
<comment type="subcellular location">
    <subcellularLocation>
        <location evidence="1">Cytoplasm</location>
    </subcellularLocation>
</comment>
<comment type="domain">
    <text evidence="1">The PRC barrel domain binds ribosomal protein uS19.</text>
</comment>
<comment type="similarity">
    <text evidence="1">Belongs to the RimM family.</text>
</comment>
<gene>
    <name evidence="1" type="primary">rimM</name>
    <name type="ordered locus">SACOL1255</name>
</gene>
<name>RIMM_STAAC</name>
<protein>
    <recommendedName>
        <fullName evidence="1">Ribosome maturation factor RimM</fullName>
    </recommendedName>
</protein>
<feature type="chain" id="PRO_0000163351" description="Ribosome maturation factor RimM">
    <location>
        <begin position="1"/>
        <end position="167"/>
    </location>
</feature>
<feature type="domain" description="PRC barrel" evidence="1">
    <location>
        <begin position="94"/>
        <end position="165"/>
    </location>
</feature>
<proteinExistence type="inferred from homology"/>
<reference key="1">
    <citation type="journal article" date="2005" name="J. Bacteriol.">
        <title>Insights on evolution of virulence and resistance from the complete genome analysis of an early methicillin-resistant Staphylococcus aureus strain and a biofilm-producing methicillin-resistant Staphylococcus epidermidis strain.</title>
        <authorList>
            <person name="Gill S.R."/>
            <person name="Fouts D.E."/>
            <person name="Archer G.L."/>
            <person name="Mongodin E.F."/>
            <person name="DeBoy R.T."/>
            <person name="Ravel J."/>
            <person name="Paulsen I.T."/>
            <person name="Kolonay J.F."/>
            <person name="Brinkac L.M."/>
            <person name="Beanan M.J."/>
            <person name="Dodson R.J."/>
            <person name="Daugherty S.C."/>
            <person name="Madupu R."/>
            <person name="Angiuoli S.V."/>
            <person name="Durkin A.S."/>
            <person name="Haft D.H."/>
            <person name="Vamathevan J.J."/>
            <person name="Khouri H."/>
            <person name="Utterback T.R."/>
            <person name="Lee C."/>
            <person name="Dimitrov G."/>
            <person name="Jiang L."/>
            <person name="Qin H."/>
            <person name="Weidman J."/>
            <person name="Tran K."/>
            <person name="Kang K.H."/>
            <person name="Hance I.R."/>
            <person name="Nelson K.E."/>
            <person name="Fraser C.M."/>
        </authorList>
    </citation>
    <scope>NUCLEOTIDE SEQUENCE [LARGE SCALE GENOMIC DNA]</scope>
    <source>
        <strain>COL</strain>
    </source>
</reference>
<keyword id="KW-0143">Chaperone</keyword>
<keyword id="KW-0963">Cytoplasm</keyword>
<keyword id="KW-0690">Ribosome biogenesis</keyword>
<keyword id="KW-0698">rRNA processing</keyword>
<organism>
    <name type="scientific">Staphylococcus aureus (strain COL)</name>
    <dbReference type="NCBI Taxonomy" id="93062"/>
    <lineage>
        <taxon>Bacteria</taxon>
        <taxon>Bacillati</taxon>
        <taxon>Bacillota</taxon>
        <taxon>Bacilli</taxon>
        <taxon>Bacillales</taxon>
        <taxon>Staphylococcaceae</taxon>
        <taxon>Staphylococcus</taxon>
    </lineage>
</organism>
<evidence type="ECO:0000255" key="1">
    <source>
        <dbReference type="HAMAP-Rule" id="MF_00014"/>
    </source>
</evidence>
<accession>Q5HGJ3</accession>
<dbReference type="EMBL" id="CP000046">
    <property type="protein sequence ID" value="AAW38088.1"/>
    <property type="molecule type" value="Genomic_DNA"/>
</dbReference>
<dbReference type="RefSeq" id="WP_001261987.1">
    <property type="nucleotide sequence ID" value="NZ_JBGOFO010000002.1"/>
</dbReference>
<dbReference type="SMR" id="Q5HGJ3"/>
<dbReference type="KEGG" id="sac:SACOL1255"/>
<dbReference type="HOGENOM" id="CLU_077636_3_1_9"/>
<dbReference type="Proteomes" id="UP000000530">
    <property type="component" value="Chromosome"/>
</dbReference>
<dbReference type="GO" id="GO:0005737">
    <property type="term" value="C:cytoplasm"/>
    <property type="evidence" value="ECO:0007669"/>
    <property type="project" value="UniProtKB-SubCell"/>
</dbReference>
<dbReference type="GO" id="GO:0005840">
    <property type="term" value="C:ribosome"/>
    <property type="evidence" value="ECO:0007669"/>
    <property type="project" value="InterPro"/>
</dbReference>
<dbReference type="GO" id="GO:0043022">
    <property type="term" value="F:ribosome binding"/>
    <property type="evidence" value="ECO:0007669"/>
    <property type="project" value="InterPro"/>
</dbReference>
<dbReference type="GO" id="GO:0042274">
    <property type="term" value="P:ribosomal small subunit biogenesis"/>
    <property type="evidence" value="ECO:0007669"/>
    <property type="project" value="UniProtKB-UniRule"/>
</dbReference>
<dbReference type="GO" id="GO:0006364">
    <property type="term" value="P:rRNA processing"/>
    <property type="evidence" value="ECO:0007669"/>
    <property type="project" value="UniProtKB-UniRule"/>
</dbReference>
<dbReference type="Gene3D" id="2.30.30.240">
    <property type="entry name" value="PRC-barrel domain"/>
    <property type="match status" value="1"/>
</dbReference>
<dbReference type="Gene3D" id="2.40.30.60">
    <property type="entry name" value="RimM"/>
    <property type="match status" value="1"/>
</dbReference>
<dbReference type="HAMAP" id="MF_00014">
    <property type="entry name" value="Ribosome_mat_RimM"/>
    <property type="match status" value="1"/>
</dbReference>
<dbReference type="InterPro" id="IPR011033">
    <property type="entry name" value="PRC_barrel-like_sf"/>
</dbReference>
<dbReference type="InterPro" id="IPR056792">
    <property type="entry name" value="PRC_RimM"/>
</dbReference>
<dbReference type="InterPro" id="IPR011961">
    <property type="entry name" value="RimM"/>
</dbReference>
<dbReference type="InterPro" id="IPR002676">
    <property type="entry name" value="RimM_N"/>
</dbReference>
<dbReference type="InterPro" id="IPR036976">
    <property type="entry name" value="RimM_N_sf"/>
</dbReference>
<dbReference type="InterPro" id="IPR009000">
    <property type="entry name" value="Transl_B-barrel_sf"/>
</dbReference>
<dbReference type="NCBIfam" id="TIGR02273">
    <property type="entry name" value="16S_RimM"/>
    <property type="match status" value="1"/>
</dbReference>
<dbReference type="PANTHER" id="PTHR33692">
    <property type="entry name" value="RIBOSOME MATURATION FACTOR RIMM"/>
    <property type="match status" value="1"/>
</dbReference>
<dbReference type="PANTHER" id="PTHR33692:SF1">
    <property type="entry name" value="RIBOSOME MATURATION FACTOR RIMM"/>
    <property type="match status" value="1"/>
</dbReference>
<dbReference type="Pfam" id="PF24986">
    <property type="entry name" value="PRC_RimM"/>
    <property type="match status" value="1"/>
</dbReference>
<dbReference type="Pfam" id="PF01782">
    <property type="entry name" value="RimM"/>
    <property type="match status" value="1"/>
</dbReference>
<dbReference type="SUPFAM" id="SSF50346">
    <property type="entry name" value="PRC-barrel domain"/>
    <property type="match status" value="1"/>
</dbReference>
<dbReference type="SUPFAM" id="SSF50447">
    <property type="entry name" value="Translation proteins"/>
    <property type="match status" value="1"/>
</dbReference>